<sequence>MIKLGIVMDPIANINIKKDSSFAMLLEAQRRGYELHYMEMGDLYLINGEARAHTRTLNVKQNYEEWFSFVGEQDLPLADLDVILMRKDPPFDTEFIYATYILERAEEKGTLIVNKPQSLRDCNEKLFTAWFSDLTPETLVTRNKAQLKAFWEKHSDIILKPLDGMGGASIFRVKEGDPNLGVIAETLTEHGTRYCMAQNYLPAIKDGDKRVLVVDGEPVPYCLARIPQGGETRGNLAAGGRGEPRPLTESDWKIARQIGPTLKEKGLIFVGLDIIGDRLTEINVTSPTCIREIEAEFPVSITGMLMDAIEARLQQQ</sequence>
<feature type="chain" id="PRO_0000197465" description="Glutathione synthetase">
    <location>
        <begin position="1"/>
        <end position="316"/>
    </location>
</feature>
<feature type="domain" description="ATP-grasp">
    <location>
        <begin position="125"/>
        <end position="310"/>
    </location>
</feature>
<feature type="binding site" evidence="1">
    <location>
        <begin position="151"/>
        <end position="207"/>
    </location>
    <ligand>
        <name>ATP</name>
        <dbReference type="ChEBI" id="CHEBI:30616"/>
    </ligand>
</feature>
<feature type="binding site" evidence="1">
    <location>
        <position position="281"/>
    </location>
    <ligand>
        <name>Mg(2+)</name>
        <dbReference type="ChEBI" id="CHEBI:18420"/>
    </ligand>
</feature>
<feature type="binding site" evidence="1">
    <location>
        <position position="283"/>
    </location>
    <ligand>
        <name>Mg(2+)</name>
        <dbReference type="ChEBI" id="CHEBI:18420"/>
    </ligand>
</feature>
<feature type="mutagenesis site" description="No loss of activity." evidence="3">
    <original>C</original>
    <variation>A</variation>
    <location>
        <position position="122"/>
    </location>
</feature>
<feature type="mutagenesis site" description="No loss of activity." evidence="3">
    <original>C</original>
    <variation>A</variation>
    <location>
        <position position="195"/>
    </location>
</feature>
<feature type="mutagenesis site" description="No loss of activity." evidence="3">
    <original>C</original>
    <variation>A</variation>
    <location>
        <position position="222"/>
    </location>
</feature>
<feature type="mutagenesis site" description="Loss of activity." evidence="4">
    <original>P</original>
    <variation>V</variation>
    <location>
        <position position="227"/>
    </location>
</feature>
<feature type="mutagenesis site" description="Loss of activity." evidence="2">
    <original>R</original>
    <variation>A</variation>
    <variation>K</variation>
    <location>
        <position position="233"/>
    </location>
</feature>
<feature type="mutagenesis site" description="Loss of activity." evidence="4">
    <original>G</original>
    <variation>V</variation>
    <location>
        <position position="240"/>
    </location>
</feature>
<feature type="mutagenesis site" description="No loss of activity." evidence="2">
    <original>R</original>
    <variation>A</variation>
    <variation>K</variation>
    <location>
        <position position="241"/>
    </location>
</feature>
<feature type="mutagenesis site" description="No loss of activity." evidence="3">
    <original>C</original>
    <variation>A</variation>
    <location>
        <position position="289"/>
    </location>
</feature>
<feature type="strand" evidence="6">
    <location>
        <begin position="3"/>
        <end position="7"/>
    </location>
</feature>
<feature type="helix" evidence="6">
    <location>
        <begin position="11"/>
        <end position="13"/>
    </location>
</feature>
<feature type="turn" evidence="6">
    <location>
        <begin position="16"/>
        <end position="18"/>
    </location>
</feature>
<feature type="helix" evidence="6">
    <location>
        <begin position="20"/>
        <end position="30"/>
    </location>
</feature>
<feature type="strand" evidence="6">
    <location>
        <begin position="34"/>
        <end position="38"/>
    </location>
</feature>
<feature type="helix" evidence="6">
    <location>
        <begin position="40"/>
        <end position="42"/>
    </location>
</feature>
<feature type="strand" evidence="6">
    <location>
        <begin position="43"/>
        <end position="46"/>
    </location>
</feature>
<feature type="strand" evidence="6">
    <location>
        <begin position="49"/>
        <end position="59"/>
    </location>
</feature>
<feature type="strand" evidence="6">
    <location>
        <begin position="67"/>
        <end position="76"/>
    </location>
</feature>
<feature type="helix" evidence="6">
    <location>
        <begin position="77"/>
        <end position="79"/>
    </location>
</feature>
<feature type="strand" evidence="6">
    <location>
        <begin position="80"/>
        <end position="85"/>
    </location>
</feature>
<feature type="helix" evidence="6">
    <location>
        <begin position="93"/>
        <end position="107"/>
    </location>
</feature>
<feature type="strand" evidence="6">
    <location>
        <begin position="111"/>
        <end position="114"/>
    </location>
</feature>
<feature type="helix" evidence="6">
    <location>
        <begin position="116"/>
        <end position="121"/>
    </location>
</feature>
<feature type="helix" evidence="6">
    <location>
        <begin position="126"/>
        <end position="131"/>
    </location>
</feature>
<feature type="turn" evidence="6">
    <location>
        <begin position="132"/>
        <end position="134"/>
    </location>
</feature>
<feature type="strand" evidence="6">
    <location>
        <begin position="138"/>
        <end position="142"/>
    </location>
</feature>
<feature type="helix" evidence="6">
    <location>
        <begin position="144"/>
        <end position="154"/>
    </location>
</feature>
<feature type="strand" evidence="6">
    <location>
        <begin position="155"/>
        <end position="160"/>
    </location>
</feature>
<feature type="turn" evidence="6">
    <location>
        <begin position="166"/>
        <end position="169"/>
    </location>
</feature>
<feature type="strand" evidence="6">
    <location>
        <begin position="171"/>
        <end position="173"/>
    </location>
</feature>
<feature type="helix" evidence="6">
    <location>
        <begin position="180"/>
        <end position="187"/>
    </location>
</feature>
<feature type="turn" evidence="6">
    <location>
        <begin position="188"/>
        <end position="192"/>
    </location>
</feature>
<feature type="strand" evidence="6">
    <location>
        <begin position="195"/>
        <end position="199"/>
    </location>
</feature>
<feature type="helix" evidence="6">
    <location>
        <begin position="202"/>
        <end position="206"/>
    </location>
</feature>
<feature type="strand" evidence="6">
    <location>
        <begin position="208"/>
        <end position="214"/>
    </location>
</feature>
<feature type="strand" evidence="6">
    <location>
        <begin position="220"/>
        <end position="226"/>
    </location>
</feature>
<feature type="helix" evidence="6">
    <location>
        <begin position="236"/>
        <end position="238"/>
    </location>
</feature>
<feature type="strand" evidence="6">
    <location>
        <begin position="241"/>
        <end position="246"/>
    </location>
</feature>
<feature type="helix" evidence="6">
    <location>
        <begin position="249"/>
        <end position="264"/>
    </location>
</feature>
<feature type="strand" evidence="6">
    <location>
        <begin position="269"/>
        <end position="275"/>
    </location>
</feature>
<feature type="strand" evidence="6">
    <location>
        <begin position="278"/>
        <end position="283"/>
    </location>
</feature>
<feature type="helix" evidence="6">
    <location>
        <begin position="290"/>
        <end position="296"/>
    </location>
</feature>
<feature type="helix" evidence="6">
    <location>
        <begin position="301"/>
        <end position="312"/>
    </location>
</feature>
<protein>
    <recommendedName>
        <fullName>Glutathione synthetase</fullName>
        <ecNumber>6.3.2.3</ecNumber>
    </recommendedName>
    <alternativeName>
        <fullName>GSH synthetase</fullName>
        <shortName>GSH-S</shortName>
        <shortName>GSHase</shortName>
    </alternativeName>
    <alternativeName>
        <fullName>Glutathione synthase</fullName>
    </alternativeName>
</protein>
<comment type="catalytic activity">
    <reaction>
        <text>gamma-L-glutamyl-L-cysteine + glycine + ATP = glutathione + ADP + phosphate + H(+)</text>
        <dbReference type="Rhea" id="RHEA:13557"/>
        <dbReference type="ChEBI" id="CHEBI:15378"/>
        <dbReference type="ChEBI" id="CHEBI:30616"/>
        <dbReference type="ChEBI" id="CHEBI:43474"/>
        <dbReference type="ChEBI" id="CHEBI:57305"/>
        <dbReference type="ChEBI" id="CHEBI:57925"/>
        <dbReference type="ChEBI" id="CHEBI:58173"/>
        <dbReference type="ChEBI" id="CHEBI:456216"/>
        <dbReference type="EC" id="6.3.2.3"/>
    </reaction>
</comment>
<comment type="cofactor">
    <cofactor evidence="1">
        <name>Mg(2+)</name>
        <dbReference type="ChEBI" id="CHEBI:18420"/>
    </cofactor>
    <cofactor evidence="1">
        <name>Mn(2+)</name>
        <dbReference type="ChEBI" id="CHEBI:29035"/>
    </cofactor>
    <text evidence="1">Binds 1 Mg(2+) or Mn(2+) ion per subunit.</text>
</comment>
<comment type="activity regulation">
    <text>Inhibited by 7,8-dihydrofolate, methotrexate and trimethoprim.</text>
</comment>
<comment type="pathway">
    <text>Sulfur metabolism; glutathione biosynthesis; glutathione from L-cysteine and L-glutamate: step 2/2.</text>
</comment>
<comment type="subunit">
    <text>Homotetramer.</text>
</comment>
<comment type="similarity">
    <text evidence="5">Belongs to the prokaryotic GSH synthase family.</text>
</comment>
<proteinExistence type="evidence at protein level"/>
<dbReference type="EC" id="6.3.2.3"/>
<dbReference type="EMBL" id="X01666">
    <property type="protein sequence ID" value="CAA25826.1"/>
    <property type="molecule type" value="Genomic_DNA"/>
</dbReference>
<dbReference type="EMBL" id="U28377">
    <property type="protein sequence ID" value="AAA69114.1"/>
    <property type="molecule type" value="Genomic_DNA"/>
</dbReference>
<dbReference type="EMBL" id="U00096">
    <property type="protein sequence ID" value="AAC75984.1"/>
    <property type="molecule type" value="Genomic_DNA"/>
</dbReference>
<dbReference type="EMBL" id="AP009048">
    <property type="protein sequence ID" value="BAE77010.1"/>
    <property type="molecule type" value="Genomic_DNA"/>
</dbReference>
<dbReference type="PIR" id="A01194">
    <property type="entry name" value="SYECGS"/>
</dbReference>
<dbReference type="RefSeq" id="NP_417422.1">
    <property type="nucleotide sequence ID" value="NC_000913.3"/>
</dbReference>
<dbReference type="RefSeq" id="WP_000593273.1">
    <property type="nucleotide sequence ID" value="NZ_STEB01000001.1"/>
</dbReference>
<dbReference type="PDB" id="1GLV">
    <property type="method" value="X-ray"/>
    <property type="resolution" value="2.70 A"/>
    <property type="chains" value="A=1-316"/>
</dbReference>
<dbReference type="PDB" id="1GSA">
    <property type="method" value="X-ray"/>
    <property type="resolution" value="2.00 A"/>
    <property type="chains" value="A=1-316"/>
</dbReference>
<dbReference type="PDB" id="1GSH">
    <property type="method" value="X-ray"/>
    <property type="resolution" value="2.00 A"/>
    <property type="chains" value="A=1-316"/>
</dbReference>
<dbReference type="PDB" id="2GLT">
    <property type="method" value="X-ray"/>
    <property type="resolution" value="2.20 A"/>
    <property type="chains" value="A=1-316"/>
</dbReference>
<dbReference type="PDBsum" id="1GLV"/>
<dbReference type="PDBsum" id="1GSA"/>
<dbReference type="PDBsum" id="1GSH"/>
<dbReference type="PDBsum" id="2GLT"/>
<dbReference type="SMR" id="P04425"/>
<dbReference type="BioGRID" id="4259406">
    <property type="interactions" value="25"/>
</dbReference>
<dbReference type="BioGRID" id="851765">
    <property type="interactions" value="1"/>
</dbReference>
<dbReference type="DIP" id="DIP-9840N"/>
<dbReference type="FunCoup" id="P04425">
    <property type="interactions" value="379"/>
</dbReference>
<dbReference type="IntAct" id="P04425">
    <property type="interactions" value="5"/>
</dbReference>
<dbReference type="STRING" id="511145.b2947"/>
<dbReference type="jPOST" id="P04425"/>
<dbReference type="PaxDb" id="511145-b2947"/>
<dbReference type="EnsemblBacteria" id="AAC75984">
    <property type="protein sequence ID" value="AAC75984"/>
    <property type="gene ID" value="b2947"/>
</dbReference>
<dbReference type="GeneID" id="93779050"/>
<dbReference type="GeneID" id="947445"/>
<dbReference type="KEGG" id="ecj:JW2914"/>
<dbReference type="KEGG" id="eco:b2947"/>
<dbReference type="KEGG" id="ecoc:C3026_16130"/>
<dbReference type="PATRIC" id="fig|1411691.4.peg.3786"/>
<dbReference type="EchoBASE" id="EB0414"/>
<dbReference type="eggNOG" id="COG0189">
    <property type="taxonomic scope" value="Bacteria"/>
</dbReference>
<dbReference type="HOGENOM" id="CLU_068239_0_0_6"/>
<dbReference type="InParanoid" id="P04425"/>
<dbReference type="OMA" id="IWMRKDP"/>
<dbReference type="OrthoDB" id="9785415at2"/>
<dbReference type="PhylomeDB" id="P04425"/>
<dbReference type="BioCyc" id="EcoCyc:GLUTATHIONE-SYN-MONOMER"/>
<dbReference type="BioCyc" id="MetaCyc:GLUTATHIONE-SYN-MONOMER"/>
<dbReference type="BRENDA" id="6.3.2.3">
    <property type="organism ID" value="2026"/>
</dbReference>
<dbReference type="UniPathway" id="UPA00142">
    <property type="reaction ID" value="UER00210"/>
</dbReference>
<dbReference type="EvolutionaryTrace" id="P04425"/>
<dbReference type="PRO" id="PR:P04425"/>
<dbReference type="Proteomes" id="UP000000625">
    <property type="component" value="Chromosome"/>
</dbReference>
<dbReference type="GO" id="GO:0005737">
    <property type="term" value="C:cytoplasm"/>
    <property type="evidence" value="ECO:0000318"/>
    <property type="project" value="GO_Central"/>
</dbReference>
<dbReference type="GO" id="GO:0005829">
    <property type="term" value="C:cytosol"/>
    <property type="evidence" value="ECO:0000314"/>
    <property type="project" value="EcoCyc"/>
</dbReference>
<dbReference type="GO" id="GO:0005524">
    <property type="term" value="F:ATP binding"/>
    <property type="evidence" value="ECO:0007669"/>
    <property type="project" value="UniProtKB-UniRule"/>
</dbReference>
<dbReference type="GO" id="GO:0004363">
    <property type="term" value="F:glutathione synthase activity"/>
    <property type="evidence" value="ECO:0000314"/>
    <property type="project" value="EcoCyc"/>
</dbReference>
<dbReference type="GO" id="GO:0042802">
    <property type="term" value="F:identical protein binding"/>
    <property type="evidence" value="ECO:0000314"/>
    <property type="project" value="EcoCyc"/>
</dbReference>
<dbReference type="GO" id="GO:0000287">
    <property type="term" value="F:magnesium ion binding"/>
    <property type="evidence" value="ECO:0000314"/>
    <property type="project" value="EcoCyc"/>
</dbReference>
<dbReference type="GO" id="GO:0006750">
    <property type="term" value="P:glutathione biosynthetic process"/>
    <property type="evidence" value="ECO:0000315"/>
    <property type="project" value="EcoCyc"/>
</dbReference>
<dbReference type="GO" id="GO:0051289">
    <property type="term" value="P:protein homotetramerization"/>
    <property type="evidence" value="ECO:0000314"/>
    <property type="project" value="EcoCyc"/>
</dbReference>
<dbReference type="FunFam" id="3.30.1490.20:FF:000009">
    <property type="entry name" value="Glutathione synthetase"/>
    <property type="match status" value="1"/>
</dbReference>
<dbReference type="FunFam" id="3.30.470.20:FF:000010">
    <property type="entry name" value="Glutathione synthetase"/>
    <property type="match status" value="1"/>
</dbReference>
<dbReference type="FunFam" id="3.40.50.20:FF:000009">
    <property type="entry name" value="Glutathione synthetase"/>
    <property type="match status" value="1"/>
</dbReference>
<dbReference type="Gene3D" id="3.40.50.20">
    <property type="match status" value="1"/>
</dbReference>
<dbReference type="Gene3D" id="3.30.1490.20">
    <property type="entry name" value="ATP-grasp fold, A domain"/>
    <property type="match status" value="1"/>
</dbReference>
<dbReference type="Gene3D" id="3.30.470.20">
    <property type="entry name" value="ATP-grasp fold, B domain"/>
    <property type="match status" value="1"/>
</dbReference>
<dbReference type="HAMAP" id="MF_00162">
    <property type="entry name" value="GSH_S"/>
    <property type="match status" value="1"/>
</dbReference>
<dbReference type="InterPro" id="IPR011761">
    <property type="entry name" value="ATP-grasp"/>
</dbReference>
<dbReference type="InterPro" id="IPR013815">
    <property type="entry name" value="ATP_grasp_subdomain_1"/>
</dbReference>
<dbReference type="InterPro" id="IPR006284">
    <property type="entry name" value="Glut_synth_pro"/>
</dbReference>
<dbReference type="InterPro" id="IPR004218">
    <property type="entry name" value="GSHS_ATP-bd"/>
</dbReference>
<dbReference type="InterPro" id="IPR004215">
    <property type="entry name" value="GSHS_N"/>
</dbReference>
<dbReference type="InterPro" id="IPR016185">
    <property type="entry name" value="PreATP-grasp_dom_sf"/>
</dbReference>
<dbReference type="NCBIfam" id="TIGR01380">
    <property type="entry name" value="glut_syn"/>
    <property type="match status" value="1"/>
</dbReference>
<dbReference type="NCBIfam" id="NF003573">
    <property type="entry name" value="PRK05246.1"/>
    <property type="match status" value="1"/>
</dbReference>
<dbReference type="PANTHER" id="PTHR21621:SF4">
    <property type="entry name" value="GLUTATHIONE SYNTHETASE"/>
    <property type="match status" value="1"/>
</dbReference>
<dbReference type="PANTHER" id="PTHR21621">
    <property type="entry name" value="RIBOSOMAL PROTEIN S6 MODIFICATION PROTEIN"/>
    <property type="match status" value="1"/>
</dbReference>
<dbReference type="Pfam" id="PF02955">
    <property type="entry name" value="GSH-S_ATP"/>
    <property type="match status" value="1"/>
</dbReference>
<dbReference type="Pfam" id="PF02951">
    <property type="entry name" value="GSH-S_N"/>
    <property type="match status" value="1"/>
</dbReference>
<dbReference type="SUPFAM" id="SSF56059">
    <property type="entry name" value="Glutathione synthetase ATP-binding domain-like"/>
    <property type="match status" value="1"/>
</dbReference>
<dbReference type="SUPFAM" id="SSF52440">
    <property type="entry name" value="PreATP-grasp domain"/>
    <property type="match status" value="1"/>
</dbReference>
<dbReference type="PROSITE" id="PS50975">
    <property type="entry name" value="ATP_GRASP"/>
    <property type="match status" value="1"/>
</dbReference>
<keyword id="KW-0002">3D-structure</keyword>
<keyword id="KW-0067">ATP-binding</keyword>
<keyword id="KW-0903">Direct protein sequencing</keyword>
<keyword id="KW-0317">Glutathione biosynthesis</keyword>
<keyword id="KW-0436">Ligase</keyword>
<keyword id="KW-0460">Magnesium</keyword>
<keyword id="KW-0464">Manganese</keyword>
<keyword id="KW-0479">Metal-binding</keyword>
<keyword id="KW-0547">Nucleotide-binding</keyword>
<keyword id="KW-1185">Reference proteome</keyword>
<gene>
    <name type="primary">gshB</name>
    <name type="synonym">gsh-II</name>
    <name type="ordered locus">b2947</name>
    <name type="ordered locus">JW2914</name>
</gene>
<evidence type="ECO:0000250" key="1"/>
<evidence type="ECO:0000269" key="2">
    <source>
    </source>
</evidence>
<evidence type="ECO:0000269" key="3">
    <source>
    </source>
</evidence>
<evidence type="ECO:0000269" key="4">
    <source>
    </source>
</evidence>
<evidence type="ECO:0000305" key="5"/>
<evidence type="ECO:0007829" key="6">
    <source>
        <dbReference type="PDB" id="1GSA"/>
    </source>
</evidence>
<organism>
    <name type="scientific">Escherichia coli (strain K12)</name>
    <dbReference type="NCBI Taxonomy" id="83333"/>
    <lineage>
        <taxon>Bacteria</taxon>
        <taxon>Pseudomonadati</taxon>
        <taxon>Pseudomonadota</taxon>
        <taxon>Gammaproteobacteria</taxon>
        <taxon>Enterobacterales</taxon>
        <taxon>Enterobacteriaceae</taxon>
        <taxon>Escherichia</taxon>
    </lineage>
</organism>
<reference key="1">
    <citation type="journal article" date="1984" name="Nucleic Acids Res.">
        <title>Complete nucleotide sequence of the E. coli glutathione synthetase gsh-II.</title>
        <authorList>
            <person name="Gushima H."/>
            <person name="Yasuda S."/>
            <person name="Soeda E."/>
            <person name="Yokota M."/>
            <person name="Kondo M."/>
            <person name="Kimura A."/>
        </authorList>
    </citation>
    <scope>NUCLEOTIDE SEQUENCE [GENOMIC DNA]</scope>
    <source>
        <strain>B</strain>
    </source>
</reference>
<reference key="2">
    <citation type="journal article" date="1997" name="Science">
        <title>The complete genome sequence of Escherichia coli K-12.</title>
        <authorList>
            <person name="Blattner F.R."/>
            <person name="Plunkett G. III"/>
            <person name="Bloch C.A."/>
            <person name="Perna N.T."/>
            <person name="Burland V."/>
            <person name="Riley M."/>
            <person name="Collado-Vides J."/>
            <person name="Glasner J.D."/>
            <person name="Rode C.K."/>
            <person name="Mayhew G.F."/>
            <person name="Gregor J."/>
            <person name="Davis N.W."/>
            <person name="Kirkpatrick H.A."/>
            <person name="Goeden M.A."/>
            <person name="Rose D.J."/>
            <person name="Mau B."/>
            <person name="Shao Y."/>
        </authorList>
    </citation>
    <scope>NUCLEOTIDE SEQUENCE [LARGE SCALE GENOMIC DNA]</scope>
    <source>
        <strain>K12 / MG1655 / ATCC 47076</strain>
    </source>
</reference>
<reference key="3">
    <citation type="journal article" date="2006" name="Mol. Syst. Biol.">
        <title>Highly accurate genome sequences of Escherichia coli K-12 strains MG1655 and W3110.</title>
        <authorList>
            <person name="Hayashi K."/>
            <person name="Morooka N."/>
            <person name="Yamamoto Y."/>
            <person name="Fujita K."/>
            <person name="Isono K."/>
            <person name="Choi S."/>
            <person name="Ohtsubo E."/>
            <person name="Baba T."/>
            <person name="Wanner B.L."/>
            <person name="Mori H."/>
            <person name="Horiuchi T."/>
        </authorList>
    </citation>
    <scope>NUCLEOTIDE SEQUENCE [LARGE SCALE GENOMIC DNA]</scope>
    <source>
        <strain>K12 / W3110 / ATCC 27325 / DSM 5911</strain>
    </source>
</reference>
<reference key="4">
    <citation type="journal article" date="1993" name="J. Mol. Biol.">
        <title>Three-dimensional structure of the glutathione synthetase from Escherichia coli B at 2.0-A resolution.</title>
        <authorList>
            <person name="Yamaguchi H."/>
            <person name="Kato H."/>
            <person name="Hata Y."/>
            <person name="Nishioka T."/>
            <person name="Kimura A."/>
            <person name="Oda J."/>
            <person name="Katsube Y."/>
        </authorList>
    </citation>
    <scope>X-RAY CRYSTALLOGRAPHY (2.0 ANGSTROMS)</scope>
    <source>
        <strain>B</strain>
    </source>
</reference>
<reference key="5">
    <citation type="journal article" date="1996" name="Protein Eng.">
        <title>Crystal structure of glutathione synthetase at optimal pH: domain architecture and structural similarity with other proteins.</title>
        <authorList>
            <person name="Matsuda K."/>
            <person name="Mizuguchi K."/>
            <person name="Nishioka T."/>
            <person name="Kato H."/>
            <person name="Go N."/>
            <person name="Oda J."/>
        </authorList>
    </citation>
    <scope>X-RAY CRYSTALLOGRAPHY (2.0 ANGSTROMS)</scope>
    <source>
        <strain>B</strain>
    </source>
</reference>
<reference key="6">
    <citation type="journal article" date="1993" name="Biochemistry">
        <title>Flexibility impaired by mutations revealed the multifunctional roles of the loop in glutathione synthetase.</title>
        <authorList>
            <person name="Tanaka T."/>
            <person name="Yamaguchi H."/>
            <person name="Kato H."/>
            <person name="Nishioka T."/>
            <person name="Katsube Y."/>
            <person name="Oda J."/>
        </authorList>
    </citation>
    <scope>MUTAGENESIS OF PRO-227 AND GLY-240</scope>
</reference>
<reference key="7">
    <citation type="journal article" date="1992" name="Biochemistry">
        <title>Mutational and proteolytic studies on a flexible loop in glutathione synthetase from Escherichia coli B: the loop and arginine 233 are critical for the catalytic reaction.</title>
        <authorList>
            <person name="Tanaka T."/>
            <person name="Kato H."/>
            <person name="Nishioka T."/>
            <person name="Oda J."/>
        </authorList>
    </citation>
    <scope>PROTEIN SEQUENCE OF 234-242</scope>
    <scope>MUTAGENESIS OF ARG-233 AND ARG-241</scope>
    <source>
        <strain>B</strain>
    </source>
</reference>
<reference key="8">
    <citation type="journal article" date="1988" name="J. Biol. Chem.">
        <title>Role of cysteine residues in glutathione synthetase from Escherichia coli B. Chemical modification and oligonucleotide site-directed mutagenesis.</title>
        <authorList>
            <person name="Kato H."/>
            <person name="Tanaka T."/>
            <person name="Nishioka T."/>
            <person name="Kimura A."/>
            <person name="Oda J."/>
        </authorList>
    </citation>
    <scope>MUTAGENESIS OF CYSTEINE RESIDUES</scope>
    <source>
        <strain>B</strain>
    </source>
</reference>
<accession>P04425</accession>
<accession>Q2M9P6</accession>
<name>GSHB_ECOLI</name>